<accession>B3MB79</accession>
<protein>
    <recommendedName>
        <fullName>Protein maelstrom 1</fullName>
    </recommendedName>
</protein>
<proteinExistence type="inferred from homology"/>
<dbReference type="EMBL" id="CH902618">
    <property type="protein sequence ID" value="EDV41380.1"/>
    <property type="molecule type" value="Genomic_DNA"/>
</dbReference>
<dbReference type="SMR" id="B3MB79"/>
<dbReference type="FunCoup" id="B3MB79">
    <property type="interactions" value="49"/>
</dbReference>
<dbReference type="STRING" id="7217.B3MB79"/>
<dbReference type="GeneID" id="6493859"/>
<dbReference type="KEGG" id="dan:6493859"/>
<dbReference type="CTD" id="84944"/>
<dbReference type="eggNOG" id="ENOG502QTQB">
    <property type="taxonomic scope" value="Eukaryota"/>
</dbReference>
<dbReference type="HOGENOM" id="CLU_044134_1_0_1"/>
<dbReference type="InParanoid" id="B3MB79"/>
<dbReference type="OMA" id="DHSENTH"/>
<dbReference type="OrthoDB" id="24555at2759"/>
<dbReference type="PhylomeDB" id="B3MB79"/>
<dbReference type="Proteomes" id="UP000007801">
    <property type="component" value="Unassembled WGS sequence"/>
</dbReference>
<dbReference type="GO" id="GO:0005737">
    <property type="term" value="C:cytoplasm"/>
    <property type="evidence" value="ECO:0000250"/>
    <property type="project" value="UniProtKB"/>
</dbReference>
<dbReference type="GO" id="GO:0005634">
    <property type="term" value="C:nucleus"/>
    <property type="evidence" value="ECO:0000250"/>
    <property type="project" value="UniProtKB"/>
</dbReference>
<dbReference type="GO" id="GO:0043186">
    <property type="term" value="C:P granule"/>
    <property type="evidence" value="ECO:0000250"/>
    <property type="project" value="UniProtKB"/>
</dbReference>
<dbReference type="GO" id="GO:0048471">
    <property type="term" value="C:perinuclear region of cytoplasm"/>
    <property type="evidence" value="ECO:0000250"/>
    <property type="project" value="UniProtKB"/>
</dbReference>
<dbReference type="GO" id="GO:0000976">
    <property type="term" value="F:transcription cis-regulatory region binding"/>
    <property type="evidence" value="ECO:0000250"/>
    <property type="project" value="UniProtKB"/>
</dbReference>
<dbReference type="GO" id="GO:0030718">
    <property type="term" value="P:germ-line stem cell population maintenance"/>
    <property type="evidence" value="ECO:0000250"/>
    <property type="project" value="UniProtKB"/>
</dbReference>
<dbReference type="GO" id="GO:0007140">
    <property type="term" value="P:male meiotic nuclear division"/>
    <property type="evidence" value="ECO:0007669"/>
    <property type="project" value="TreeGrafter"/>
</dbReference>
<dbReference type="GO" id="GO:0045892">
    <property type="term" value="P:negative regulation of DNA-templated transcription"/>
    <property type="evidence" value="ECO:0000250"/>
    <property type="project" value="UniProtKB"/>
</dbReference>
<dbReference type="GO" id="GO:0048477">
    <property type="term" value="P:oogenesis"/>
    <property type="evidence" value="ECO:0007669"/>
    <property type="project" value="UniProtKB-KW"/>
</dbReference>
<dbReference type="GO" id="GO:0034587">
    <property type="term" value="P:piRNA processing"/>
    <property type="evidence" value="ECO:0000250"/>
    <property type="project" value="UniProtKB"/>
</dbReference>
<dbReference type="GO" id="GO:0060964">
    <property type="term" value="P:regulation of miRNA-mediated gene silencing"/>
    <property type="evidence" value="ECO:0007669"/>
    <property type="project" value="InterPro"/>
</dbReference>
<dbReference type="GO" id="GO:0031047">
    <property type="term" value="P:regulatory ncRNA-mediated gene silencing"/>
    <property type="evidence" value="ECO:0000250"/>
    <property type="project" value="UniProtKB"/>
</dbReference>
<dbReference type="GO" id="GO:0007283">
    <property type="term" value="P:spermatogenesis"/>
    <property type="evidence" value="ECO:0000250"/>
    <property type="project" value="UniProtKB"/>
</dbReference>
<dbReference type="FunFam" id="1.10.30.10:FF:000057">
    <property type="entry name" value="Protein maelstrom 2"/>
    <property type="match status" value="1"/>
</dbReference>
<dbReference type="Gene3D" id="1.10.30.10">
    <property type="entry name" value="High mobility group box domain"/>
    <property type="match status" value="1"/>
</dbReference>
<dbReference type="InterPro" id="IPR036910">
    <property type="entry name" value="HMG_box_dom_sf"/>
</dbReference>
<dbReference type="InterPro" id="IPR024970">
    <property type="entry name" value="Maelstrom"/>
</dbReference>
<dbReference type="InterPro" id="IPR039259">
    <property type="entry name" value="Protein_maelstrom"/>
</dbReference>
<dbReference type="PANTHER" id="PTHR21358">
    <property type="entry name" value="PROTEIN MAELSTROM HOMOLOG"/>
    <property type="match status" value="1"/>
</dbReference>
<dbReference type="PANTHER" id="PTHR21358:SF4">
    <property type="entry name" value="PROTEIN MAELSTROM HOMOLOG"/>
    <property type="match status" value="1"/>
</dbReference>
<dbReference type="Pfam" id="PF13017">
    <property type="entry name" value="Maelstrom"/>
    <property type="match status" value="1"/>
</dbReference>
<dbReference type="SUPFAM" id="SSF47095">
    <property type="entry name" value="HMG-box"/>
    <property type="match status" value="1"/>
</dbReference>
<evidence type="ECO:0000250" key="1"/>
<evidence type="ECO:0000305" key="2"/>
<name>MAEL1_DROAN</name>
<keyword id="KW-0963">Cytoplasm</keyword>
<keyword id="KW-0217">Developmental protein</keyword>
<keyword id="KW-0221">Differentiation</keyword>
<keyword id="KW-0238">DNA-binding</keyword>
<keyword id="KW-0469">Meiosis</keyword>
<keyword id="KW-0539">Nucleus</keyword>
<keyword id="KW-0896">Oogenesis</keyword>
<keyword id="KW-1185">Reference proteome</keyword>
<keyword id="KW-0678">Repressor</keyword>
<keyword id="KW-0943">RNA-mediated gene silencing</keyword>
<keyword id="KW-0804">Transcription</keyword>
<keyword id="KW-0805">Transcription regulation</keyword>
<comment type="function">
    <text evidence="1">Involved both in the piRNA and miRNA metabolic processes. As a component of the meiotic nuage, plays a central role during oogenesis by repressing transposable elements and preventing their mobilization, which is essential for the germline integrity. Repression of transposable elements is mediated via the piRNA metabolic process, which mediates the repression of transposable elements during meiosis by forming complexes composed of piRNAs and Piwi proteins and governs the repression of transposons. As a nuclear component, it is required for proper differentiation in the germline stem cell (GSC) lineage by repressing microRNA-7 (miR-7), thereby acting as an indirect regulator of bag-of-marbles (Bam). Acts by binding to the promoter of miR-7 gene and repressing its expression; miR-7 repression alleviates the Bam repression by miR-7, thereby allowing differentiation in the germline stem cell (GSC) lineage (By similarity).</text>
</comment>
<comment type="subcellular location">
    <subcellularLocation>
        <location>Cytoplasm</location>
    </subcellularLocation>
    <subcellularLocation>
        <location>Nucleus</location>
    </subcellularLocation>
    <text evidence="1">Component of the meiotic nuage, also named P granule, a germ-cell-specific organelle required to repress transposon activity during meiosis.</text>
</comment>
<comment type="similarity">
    <text evidence="2">Belongs to the maelstrom family.</text>
</comment>
<organism>
    <name type="scientific">Drosophila ananassae</name>
    <name type="common">Fruit fly</name>
    <dbReference type="NCBI Taxonomy" id="7217"/>
    <lineage>
        <taxon>Eukaryota</taxon>
        <taxon>Metazoa</taxon>
        <taxon>Ecdysozoa</taxon>
        <taxon>Arthropoda</taxon>
        <taxon>Hexapoda</taxon>
        <taxon>Insecta</taxon>
        <taxon>Pterygota</taxon>
        <taxon>Neoptera</taxon>
        <taxon>Endopterygota</taxon>
        <taxon>Diptera</taxon>
        <taxon>Brachycera</taxon>
        <taxon>Muscomorpha</taxon>
        <taxon>Ephydroidea</taxon>
        <taxon>Drosophilidae</taxon>
        <taxon>Drosophila</taxon>
        <taxon>Sophophora</taxon>
    </lineage>
</organism>
<gene>
    <name type="primary">mael1</name>
    <name type="ORF">GF10993</name>
</gene>
<reference key="1">
    <citation type="journal article" date="2007" name="Nature">
        <title>Evolution of genes and genomes on the Drosophila phylogeny.</title>
        <authorList>
            <consortium name="Drosophila 12 genomes consortium"/>
        </authorList>
    </citation>
    <scope>NUCLEOTIDE SEQUENCE [LARGE SCALE GENOMIC DNA]</scope>
    <source>
        <strain>Tucson 14024-0371.13</strain>
    </source>
</reference>
<feature type="chain" id="PRO_0000367295" description="Protein maelstrom 1">
    <location>
        <begin position="1"/>
        <end position="424"/>
    </location>
</feature>
<feature type="DNA-binding region" description="HMG box">
    <location>
        <begin position="2"/>
        <end position="69"/>
    </location>
</feature>
<sequence length="424" mass="48356">MPPKKHSGFMMFVNEWRDNNPEGRNLSIAQAVSRCGSIWEKMTAQQRGPYNSGAKNADVLTRVKKERLNCHGQVLSQVELEEREMAESQINMKRCTERIVMDAKRSHDLENTKFVFVAFNYFTKALTTDVYVPAEFSASEYSFNEGIMSVYSTLIDPGQIIFGQGSDAQHHSSTTHNLPLPPNALGEKNMGKLYRNILEYLSKIQEGKDATKPFVVFTKTDMVPVVKSCFRYLACENQDGSYENGDQIQVLDIQYLLFILKKEVLDIAGVSDEKINLYVTDAYFLKDFFEFTPEISCQYHEENDRSKYCTQSLVMRWAYTFSDYMCSDLAISVQPGKHIPPKTKPNYRFYRQPPAGDHLHHPLTCQQTILRLLATLTRKTNFHLSVGGEPPTVALVPSDLTLWDPGIYPLTPVPFMTFLTTTLV</sequence>